<gene>
    <name evidence="2" type="primary">nscR</name>
    <name type="ORF">TRV_00390</name>
</gene>
<keyword id="KW-0238">DNA-binding</keyword>
<keyword id="KW-0479">Metal-binding</keyword>
<keyword id="KW-0539">Nucleus</keyword>
<keyword id="KW-0804">Transcription</keyword>
<keyword id="KW-0805">Transcription regulation</keyword>
<keyword id="KW-0862">Zinc</keyword>
<organism>
    <name type="scientific">Trichophyton verrucosum (strain HKI 0517)</name>
    <dbReference type="NCBI Taxonomy" id="663202"/>
    <lineage>
        <taxon>Eukaryota</taxon>
        <taxon>Fungi</taxon>
        <taxon>Dikarya</taxon>
        <taxon>Ascomycota</taxon>
        <taxon>Pezizomycotina</taxon>
        <taxon>Eurotiomycetes</taxon>
        <taxon>Eurotiomycetidae</taxon>
        <taxon>Onygenales</taxon>
        <taxon>Arthrodermataceae</taxon>
        <taxon>Trichophyton</taxon>
    </lineage>
</organism>
<evidence type="ECO:0000255" key="1">
    <source>
        <dbReference type="PROSITE-ProRule" id="PRU00227"/>
    </source>
</evidence>
<evidence type="ECO:0000303" key="2">
    <source>
    </source>
</evidence>
<evidence type="ECO:0000305" key="3">
    <source>
    </source>
</evidence>
<name>NSCR_TRIVH</name>
<proteinExistence type="inferred from homology"/>
<accession>D4CZZ6</accession>
<comment type="function">
    <text evidence="3">Transcription factor that specifically regulates the neosartoricin B biosynthesis gene cluster (PubMed:23758576).</text>
</comment>
<comment type="subcellular location">
    <subcellularLocation>
        <location evidence="1">Nucleus</location>
    </subcellularLocation>
</comment>
<protein>
    <recommendedName>
        <fullName evidence="2">C6 finger domain transcription factor nscR</fullName>
    </recommendedName>
    <alternativeName>
        <fullName evidence="2">Neosartiricin B biosynthesis protein R</fullName>
    </alternativeName>
</protein>
<reference key="1">
    <citation type="journal article" date="2011" name="Genome Biol.">
        <title>Comparative and functional genomics provide insights into the pathogenicity of dermatophytic fungi.</title>
        <authorList>
            <person name="Burmester A."/>
            <person name="Shelest E."/>
            <person name="Gloeckner G."/>
            <person name="Heddergott C."/>
            <person name="Schindler S."/>
            <person name="Staib P."/>
            <person name="Heidel A."/>
            <person name="Felder M."/>
            <person name="Petzold A."/>
            <person name="Szafranski K."/>
            <person name="Feuermann M."/>
            <person name="Pedruzzi I."/>
            <person name="Priebe S."/>
            <person name="Groth M."/>
            <person name="Winkler R."/>
            <person name="Li W."/>
            <person name="Kniemeyer O."/>
            <person name="Schroeckh V."/>
            <person name="Hertweck C."/>
            <person name="Hube B."/>
            <person name="White T.C."/>
            <person name="Platzer M."/>
            <person name="Guthke R."/>
            <person name="Heitman J."/>
            <person name="Woestemeyer J."/>
            <person name="Zipfel P.F."/>
            <person name="Monod M."/>
            <person name="Brakhage A.A."/>
        </authorList>
    </citation>
    <scope>NUCLEOTIDE SEQUENCE [LARGE SCALE GENOMIC DNA]</scope>
    <source>
        <strain>HKI 0517</strain>
    </source>
</reference>
<reference key="2">
    <citation type="journal article" date="2013" name="ACS Synth. Biol.">
        <title>Discovery of cryptic polyketide metabolites from dermatophytes using heterologous expression in Aspergillus nidulans.</title>
        <authorList>
            <person name="Yin W.B."/>
            <person name="Chooi Y.H."/>
            <person name="Smith A.R."/>
            <person name="Cacho R.A."/>
            <person name="Hu Y."/>
            <person name="White T.C."/>
            <person name="Tang Y."/>
        </authorList>
    </citation>
    <scope>FUNCTION</scope>
</reference>
<sequence length="654" mass="73000">MEKRGPKRRQEAAHLSCELCRERKVKCDKLDPCTNCSSAGVICVPVRRPRLPRGAHAQRLRRISPEDPEAPIQIDIASPADAGTIADDDLKERIRRLEALVDSMRSSNHVSKQLIKNFQTNKDQEAQDTIESTLNRIDEDSLLIKGPRVHPSDGGLRILGLSGSSSPETGWASIIEDREVSMQLCQVYLLNVDPVIKILHRPSLEKWMLEGQRYLGLPEGHAAVESLGAAICYVAATSLTETQSWARFHTTKSSIVARARRACETTLEKSSPLLSPDVTTLQAFVLYLVARRSEDPSRAVWTLMAFAVRIAKALDLPRGIDDNFFGQQMRKRLWLAICLLDFQTSLSQPSEPLITVAEATSLFSPPRHINDSDFDPTTSHDIPDREGLTDTTFSLVSHHVQAAGRLLNFEPSVKDDGSRQQHVQNFEQRTLRLLLYCDPESTPYAWFTWHRIQCFVSGARLSAIRPLIHQHGGHPIPILDANEGTSILSLALNILEKVQLVHTDPRGEGFRWFVTVPWQPLAIAISECYICQDRSLVQRAWPIVEAAFQQHEATVSGSSKAISITLERLMCRVRGKLLPSLELSRPGEDLALVTEAPISTSPQKVDPLVFSLDSPLLIAGQEQLLDADQSWAAWEEVIASLHYDETGRADMFLS</sequence>
<feature type="chain" id="PRO_0000437929" description="C6 finger domain transcription factor nscR">
    <location>
        <begin position="1"/>
        <end position="654"/>
    </location>
</feature>
<feature type="DNA-binding region" description="Zn(2)-C6 fungal-type" evidence="1">
    <location>
        <begin position="17"/>
        <end position="43"/>
    </location>
</feature>
<dbReference type="EMBL" id="ACYE01000020">
    <property type="protein sequence ID" value="EFE44839.1"/>
    <property type="molecule type" value="Genomic_DNA"/>
</dbReference>
<dbReference type="RefSeq" id="XP_003025450.1">
    <property type="nucleotide sequence ID" value="XM_003025404.1"/>
</dbReference>
<dbReference type="GeneID" id="9581676"/>
<dbReference type="KEGG" id="tve:TRV_00390"/>
<dbReference type="HOGENOM" id="CLU_004083_7_1_1"/>
<dbReference type="OrthoDB" id="3754at34384"/>
<dbReference type="Proteomes" id="UP000008383">
    <property type="component" value="Unassembled WGS sequence"/>
</dbReference>
<dbReference type="GO" id="GO:0005634">
    <property type="term" value="C:nucleus"/>
    <property type="evidence" value="ECO:0007669"/>
    <property type="project" value="UniProtKB-SubCell"/>
</dbReference>
<dbReference type="GO" id="GO:0003677">
    <property type="term" value="F:DNA binding"/>
    <property type="evidence" value="ECO:0007669"/>
    <property type="project" value="UniProtKB-KW"/>
</dbReference>
<dbReference type="GO" id="GO:0000981">
    <property type="term" value="F:DNA-binding transcription factor activity, RNA polymerase II-specific"/>
    <property type="evidence" value="ECO:0007669"/>
    <property type="project" value="InterPro"/>
</dbReference>
<dbReference type="GO" id="GO:0008270">
    <property type="term" value="F:zinc ion binding"/>
    <property type="evidence" value="ECO:0007669"/>
    <property type="project" value="InterPro"/>
</dbReference>
<dbReference type="GO" id="GO:0006351">
    <property type="term" value="P:DNA-templated transcription"/>
    <property type="evidence" value="ECO:0007669"/>
    <property type="project" value="InterPro"/>
</dbReference>
<dbReference type="CDD" id="cd12148">
    <property type="entry name" value="fungal_TF_MHR"/>
    <property type="match status" value="1"/>
</dbReference>
<dbReference type="CDD" id="cd00067">
    <property type="entry name" value="GAL4"/>
    <property type="match status" value="1"/>
</dbReference>
<dbReference type="Gene3D" id="4.10.240.10">
    <property type="entry name" value="Zn(2)-C6 fungal-type DNA-binding domain"/>
    <property type="match status" value="1"/>
</dbReference>
<dbReference type="InterPro" id="IPR050613">
    <property type="entry name" value="Sec_Metabolite_Reg"/>
</dbReference>
<dbReference type="InterPro" id="IPR007219">
    <property type="entry name" value="Transcription_factor_dom_fun"/>
</dbReference>
<dbReference type="InterPro" id="IPR036864">
    <property type="entry name" value="Zn2-C6_fun-type_DNA-bd_sf"/>
</dbReference>
<dbReference type="InterPro" id="IPR001138">
    <property type="entry name" value="Zn2Cys6_DnaBD"/>
</dbReference>
<dbReference type="PANTHER" id="PTHR31001">
    <property type="entry name" value="UNCHARACTERIZED TRANSCRIPTIONAL REGULATORY PROTEIN"/>
    <property type="match status" value="1"/>
</dbReference>
<dbReference type="PANTHER" id="PTHR31001:SF50">
    <property type="entry name" value="ZN(II)2CYS6 TRANSCRIPTION FACTOR (EUROFUNG)"/>
    <property type="match status" value="1"/>
</dbReference>
<dbReference type="Pfam" id="PF04082">
    <property type="entry name" value="Fungal_trans"/>
    <property type="match status" value="1"/>
</dbReference>
<dbReference type="Pfam" id="PF00172">
    <property type="entry name" value="Zn_clus"/>
    <property type="match status" value="1"/>
</dbReference>
<dbReference type="SMART" id="SM00066">
    <property type="entry name" value="GAL4"/>
    <property type="match status" value="1"/>
</dbReference>
<dbReference type="SUPFAM" id="SSF57701">
    <property type="entry name" value="Zn2/Cys6 DNA-binding domain"/>
    <property type="match status" value="1"/>
</dbReference>
<dbReference type="PROSITE" id="PS00463">
    <property type="entry name" value="ZN2_CY6_FUNGAL_1"/>
    <property type="match status" value="1"/>
</dbReference>
<dbReference type="PROSITE" id="PS50048">
    <property type="entry name" value="ZN2_CY6_FUNGAL_2"/>
    <property type="match status" value="1"/>
</dbReference>